<accession>P68717</accession>
<accession>Q76ZQ2</accession>
<comment type="function">
    <text evidence="1">Late protein which is a part of a large complex required for early virion morphogenesis. This complex participates in the formation of virosomes and the incorporation of virosomal contents into nascent immature virions. Required for the stability and kinase activity of OPG054.</text>
</comment>
<comment type="subunit">
    <text evidence="1">Part of a complex composed of the kinase OPG054, OPG092, OPG100, OPG114, OPG115, OPG142 and OPG157.</text>
</comment>
<comment type="subcellular location">
    <subcellularLocation>
        <location evidence="1">Host cytoplasm</location>
    </subcellularLocation>
    <subcellularLocation>
        <location evidence="1">Virion</location>
    </subcellularLocation>
    <text evidence="1">Localizes in cytoplasmic virus factories and present in the virion core.</text>
</comment>
<comment type="similarity">
    <text evidence="2">Belongs to the orthopoxvirus OPG142 family.</text>
</comment>
<organism>
    <name type="scientific">Vaccinia virus (strain Ankara)</name>
    <name type="common">VACV</name>
    <dbReference type="NCBI Taxonomy" id="126794"/>
    <lineage>
        <taxon>Viruses</taxon>
        <taxon>Varidnaviria</taxon>
        <taxon>Bamfordvirae</taxon>
        <taxon>Nucleocytoviricota</taxon>
        <taxon>Pokkesviricetes</taxon>
        <taxon>Chitovirales</taxon>
        <taxon>Poxviridae</taxon>
        <taxon>Chordopoxvirinae</taxon>
        <taxon>Orthopoxvirus</taxon>
        <taxon>Vaccinia virus</taxon>
    </lineage>
</organism>
<keyword id="KW-0067">ATP-binding</keyword>
<keyword id="KW-0238">DNA-binding</keyword>
<keyword id="KW-0347">Helicase</keyword>
<keyword id="KW-1035">Host cytoplasm</keyword>
<keyword id="KW-0378">Hydrolase</keyword>
<keyword id="KW-0426">Late protein</keyword>
<keyword id="KW-0547">Nucleotide-binding</keyword>
<keyword id="KW-0597">Phosphoprotein</keyword>
<keyword id="KW-0804">Transcription</keyword>
<keyword id="KW-0805">Transcription regulation</keyword>
<keyword id="KW-0806">Transcription termination</keyword>
<keyword id="KW-0946">Virion</keyword>
<evidence type="ECO:0000250" key="1">
    <source>
        <dbReference type="UniProtKB" id="P68718"/>
    </source>
</evidence>
<evidence type="ECO:0000305" key="2"/>
<sequence length="94" mass="10951">MFVDDNSLIIYSTWPSTLSDSSGRVIVMPDNRSFTFKEGFKLDESIKSILLVNPSSIDLLKIRVYKHRIKWMGDIFVLFEQENIPPPFRLVNDK</sequence>
<dbReference type="EMBL" id="U94848">
    <property type="protein sequence ID" value="AAB96466.1"/>
    <property type="molecule type" value="Genomic_DNA"/>
</dbReference>
<dbReference type="EMBL" id="AY603355">
    <property type="protein sequence ID" value="AAT10525.1"/>
    <property type="molecule type" value="Genomic_DNA"/>
</dbReference>
<dbReference type="DNASU" id="3707533"/>
<dbReference type="KEGG" id="vg:3707533"/>
<dbReference type="Proteomes" id="UP000159908">
    <property type="component" value="Segment"/>
</dbReference>
<dbReference type="Proteomes" id="UP000172909">
    <property type="component" value="Segment"/>
</dbReference>
<dbReference type="GO" id="GO:0030430">
    <property type="term" value="C:host cell cytoplasm"/>
    <property type="evidence" value="ECO:0007669"/>
    <property type="project" value="UniProtKB-SubCell"/>
</dbReference>
<dbReference type="GO" id="GO:0044423">
    <property type="term" value="C:virion component"/>
    <property type="evidence" value="ECO:0007669"/>
    <property type="project" value="UniProtKB-KW"/>
</dbReference>
<dbReference type="GO" id="GO:0005524">
    <property type="term" value="F:ATP binding"/>
    <property type="evidence" value="ECO:0007669"/>
    <property type="project" value="UniProtKB-KW"/>
</dbReference>
<dbReference type="GO" id="GO:0003677">
    <property type="term" value="F:DNA binding"/>
    <property type="evidence" value="ECO:0007669"/>
    <property type="project" value="UniProtKB-KW"/>
</dbReference>
<dbReference type="GO" id="GO:0004386">
    <property type="term" value="F:helicase activity"/>
    <property type="evidence" value="ECO:0007669"/>
    <property type="project" value="UniProtKB-KW"/>
</dbReference>
<dbReference type="GO" id="GO:0016787">
    <property type="term" value="F:hydrolase activity"/>
    <property type="evidence" value="ECO:0007669"/>
    <property type="project" value="UniProtKB-KW"/>
</dbReference>
<dbReference type="GO" id="GO:0006353">
    <property type="term" value="P:DNA-templated transcription termination"/>
    <property type="evidence" value="ECO:0007669"/>
    <property type="project" value="UniProtKB-KW"/>
</dbReference>
<dbReference type="InterPro" id="IPR008445">
    <property type="entry name" value="A15"/>
</dbReference>
<dbReference type="Pfam" id="PF05846">
    <property type="entry name" value="Chordopox_A15"/>
    <property type="match status" value="1"/>
</dbReference>
<name>PG142_VACCA</name>
<proteinExistence type="inferred from homology"/>
<feature type="chain" id="PRO_0000099245" description="Core protein OPG142">
    <location>
        <begin position="1"/>
        <end position="94"/>
    </location>
</feature>
<reference key="1">
    <citation type="journal article" date="1998" name="Virology">
        <title>The complete genomic sequence of the modified vaccinia Ankara strain: comparison with other orthopoxviruses.</title>
        <authorList>
            <person name="Antoine G."/>
            <person name="Scheiflinger F."/>
            <person name="Dorner F."/>
            <person name="Falkner F.G."/>
        </authorList>
    </citation>
    <scope>NUCLEOTIDE SEQUENCE [LARGE SCALE GENOMIC DNA]</scope>
</reference>
<reference key="2">
    <citation type="submission" date="2004-04" db="EMBL/GenBank/DDBJ databases">
        <authorList>
            <person name="Esposito J.J."/>
            <person name="Frace M."/>
            <person name="Sammons S.A."/>
            <person name="Olsen-Rasmussen M.S."/>
            <person name="Osborne J."/>
            <person name="Khristova M."/>
            <person name="Wohlhueter R.M."/>
        </authorList>
    </citation>
    <scope>NUCLEOTIDE SEQUENCE [LARGE SCALE GENOMIC DNA]</scope>
    <source>
        <strain>Isolate Acambis 3000</strain>
    </source>
</reference>
<protein>
    <recommendedName>
        <fullName>Core protein OPG142</fullName>
    </recommendedName>
</protein>
<gene>
    <name type="primary">OPG142</name>
    <name type="ordered locus">MVA126L</name>
    <name type="ordered locus">ACAM3000_MVA_126</name>
</gene>
<organismHost>
    <name type="scientific">Homo sapiens</name>
    <name type="common">Human</name>
    <dbReference type="NCBI Taxonomy" id="9606"/>
</organismHost>